<proteinExistence type="inferred from homology"/>
<comment type="function">
    <text evidence="1">One of the proteins required for the normal export of preproteins out of the cell cytoplasm. It is a molecular chaperone that binds to a subset of precursor proteins, maintaining them in a translocation-competent state. It also specifically binds to its receptor SecA.</text>
</comment>
<comment type="subunit">
    <text evidence="1">Homotetramer, a dimer of dimers. One homotetramer interacts with 1 SecA dimer.</text>
</comment>
<comment type="subcellular location">
    <subcellularLocation>
        <location evidence="1">Cytoplasm</location>
    </subcellularLocation>
</comment>
<comment type="similarity">
    <text evidence="1">Belongs to the SecB family.</text>
</comment>
<accession>Q2NYA6</accession>
<organism>
    <name type="scientific">Xanthomonas oryzae pv. oryzae (strain MAFF 311018)</name>
    <dbReference type="NCBI Taxonomy" id="342109"/>
    <lineage>
        <taxon>Bacteria</taxon>
        <taxon>Pseudomonadati</taxon>
        <taxon>Pseudomonadota</taxon>
        <taxon>Gammaproteobacteria</taxon>
        <taxon>Lysobacterales</taxon>
        <taxon>Lysobacteraceae</taxon>
        <taxon>Xanthomonas</taxon>
    </lineage>
</organism>
<reference key="1">
    <citation type="journal article" date="2005" name="Jpn. Agric. Res. Q.">
        <title>Genome sequence of Xanthomonas oryzae pv. oryzae suggests contribution of large numbers of effector genes and insertion sequences to its race diversity.</title>
        <authorList>
            <person name="Ochiai H."/>
            <person name="Inoue Y."/>
            <person name="Takeya M."/>
            <person name="Sasaki A."/>
            <person name="Kaku H."/>
        </authorList>
    </citation>
    <scope>NUCLEOTIDE SEQUENCE [LARGE SCALE GENOMIC DNA]</scope>
    <source>
        <strain>MAFF 311018</strain>
    </source>
</reference>
<sequence>MSDEILNGAAAPADAAAAGPAFTIEKIYVKDVSFESPNAPAVFNDANQPELQLNLNQKVQRLNDNAFEVVLAVTLTCTAGGKTAYVAEVQQAGVFGLVGLDPQAIDVLLGTQCPNILFPYVRTLVSDLIQAGGFPPFYLQPINFEALYAESVRQRHNESASLADSEPAGNA</sequence>
<name>SECB_XANOM</name>
<feature type="chain" id="PRO_1000062533" description="Protein-export protein SecB">
    <location>
        <begin position="1"/>
        <end position="171"/>
    </location>
</feature>
<evidence type="ECO:0000255" key="1">
    <source>
        <dbReference type="HAMAP-Rule" id="MF_00821"/>
    </source>
</evidence>
<gene>
    <name evidence="1" type="primary">secB</name>
    <name type="ordered locus">XOO3966</name>
</gene>
<dbReference type="EMBL" id="AP008229">
    <property type="protein sequence ID" value="BAE70721.1"/>
    <property type="molecule type" value="Genomic_DNA"/>
</dbReference>
<dbReference type="RefSeq" id="WP_011260529.1">
    <property type="nucleotide sequence ID" value="NC_007705.1"/>
</dbReference>
<dbReference type="SMR" id="Q2NYA6"/>
<dbReference type="KEGG" id="xom:XOO3966"/>
<dbReference type="HOGENOM" id="CLU_111574_1_0_6"/>
<dbReference type="GO" id="GO:0005737">
    <property type="term" value="C:cytoplasm"/>
    <property type="evidence" value="ECO:0007669"/>
    <property type="project" value="UniProtKB-SubCell"/>
</dbReference>
<dbReference type="GO" id="GO:0051082">
    <property type="term" value="F:unfolded protein binding"/>
    <property type="evidence" value="ECO:0007669"/>
    <property type="project" value="InterPro"/>
</dbReference>
<dbReference type="GO" id="GO:0006457">
    <property type="term" value="P:protein folding"/>
    <property type="evidence" value="ECO:0007669"/>
    <property type="project" value="UniProtKB-UniRule"/>
</dbReference>
<dbReference type="GO" id="GO:0051262">
    <property type="term" value="P:protein tetramerization"/>
    <property type="evidence" value="ECO:0007669"/>
    <property type="project" value="InterPro"/>
</dbReference>
<dbReference type="GO" id="GO:0015031">
    <property type="term" value="P:protein transport"/>
    <property type="evidence" value="ECO:0007669"/>
    <property type="project" value="UniProtKB-UniRule"/>
</dbReference>
<dbReference type="Gene3D" id="3.10.420.10">
    <property type="entry name" value="SecB-like"/>
    <property type="match status" value="1"/>
</dbReference>
<dbReference type="HAMAP" id="MF_00821">
    <property type="entry name" value="SecB"/>
    <property type="match status" value="1"/>
</dbReference>
<dbReference type="InterPro" id="IPR003708">
    <property type="entry name" value="SecB"/>
</dbReference>
<dbReference type="InterPro" id="IPR035958">
    <property type="entry name" value="SecB-like_sf"/>
</dbReference>
<dbReference type="NCBIfam" id="NF004391">
    <property type="entry name" value="PRK05751.1-2"/>
    <property type="match status" value="1"/>
</dbReference>
<dbReference type="NCBIfam" id="NF004393">
    <property type="entry name" value="PRK05751.1-4"/>
    <property type="match status" value="1"/>
</dbReference>
<dbReference type="NCBIfam" id="TIGR00809">
    <property type="entry name" value="secB"/>
    <property type="match status" value="1"/>
</dbReference>
<dbReference type="PANTHER" id="PTHR36918">
    <property type="match status" value="1"/>
</dbReference>
<dbReference type="PANTHER" id="PTHR36918:SF1">
    <property type="entry name" value="PROTEIN-EXPORT PROTEIN SECB"/>
    <property type="match status" value="1"/>
</dbReference>
<dbReference type="Pfam" id="PF02556">
    <property type="entry name" value="SecB"/>
    <property type="match status" value="1"/>
</dbReference>
<dbReference type="PRINTS" id="PR01594">
    <property type="entry name" value="SECBCHAPRONE"/>
</dbReference>
<dbReference type="SUPFAM" id="SSF54611">
    <property type="entry name" value="SecB-like"/>
    <property type="match status" value="1"/>
</dbReference>
<keyword id="KW-0143">Chaperone</keyword>
<keyword id="KW-0963">Cytoplasm</keyword>
<keyword id="KW-0653">Protein transport</keyword>
<keyword id="KW-0811">Translocation</keyword>
<keyword id="KW-0813">Transport</keyword>
<protein>
    <recommendedName>
        <fullName evidence="1">Protein-export protein SecB</fullName>
    </recommendedName>
</protein>